<dbReference type="EC" id="6.1.1.18" evidence="1"/>
<dbReference type="EMBL" id="AE004969">
    <property type="protein sequence ID" value="AAW89877.2"/>
    <property type="molecule type" value="Genomic_DNA"/>
</dbReference>
<dbReference type="RefSeq" id="WP_025455955.1">
    <property type="nucleotide sequence ID" value="NC_002946.2"/>
</dbReference>
<dbReference type="SMR" id="Q5F7G0"/>
<dbReference type="STRING" id="242231.NGO_1218"/>
<dbReference type="KEGG" id="ngo:NGO_1218"/>
<dbReference type="HOGENOM" id="CLU_001882_2_3_4"/>
<dbReference type="Proteomes" id="UP000000535">
    <property type="component" value="Chromosome"/>
</dbReference>
<dbReference type="GO" id="GO:0005829">
    <property type="term" value="C:cytosol"/>
    <property type="evidence" value="ECO:0007669"/>
    <property type="project" value="TreeGrafter"/>
</dbReference>
<dbReference type="GO" id="GO:0005524">
    <property type="term" value="F:ATP binding"/>
    <property type="evidence" value="ECO:0007669"/>
    <property type="project" value="UniProtKB-UniRule"/>
</dbReference>
<dbReference type="GO" id="GO:0004819">
    <property type="term" value="F:glutamine-tRNA ligase activity"/>
    <property type="evidence" value="ECO:0007669"/>
    <property type="project" value="UniProtKB-UniRule"/>
</dbReference>
<dbReference type="GO" id="GO:0006425">
    <property type="term" value="P:glutaminyl-tRNA aminoacylation"/>
    <property type="evidence" value="ECO:0007669"/>
    <property type="project" value="InterPro"/>
</dbReference>
<dbReference type="GO" id="GO:0006424">
    <property type="term" value="P:glutamyl-tRNA aminoacylation"/>
    <property type="evidence" value="ECO:0007669"/>
    <property type="project" value="UniProtKB-UniRule"/>
</dbReference>
<dbReference type="CDD" id="cd00807">
    <property type="entry name" value="GlnRS_core"/>
    <property type="match status" value="1"/>
</dbReference>
<dbReference type="FunFam" id="2.40.240.10:FF:000001">
    <property type="entry name" value="Glutamine--tRNA ligase"/>
    <property type="match status" value="1"/>
</dbReference>
<dbReference type="FunFam" id="2.40.240.10:FF:000020">
    <property type="entry name" value="Glutamine--tRNA ligase"/>
    <property type="match status" value="1"/>
</dbReference>
<dbReference type="FunFam" id="3.40.50.620:FF:000037">
    <property type="entry name" value="Glutamine--tRNA ligase cytoplasmic"/>
    <property type="match status" value="1"/>
</dbReference>
<dbReference type="Gene3D" id="3.40.50.620">
    <property type="entry name" value="HUPs"/>
    <property type="match status" value="1"/>
</dbReference>
<dbReference type="Gene3D" id="2.40.240.10">
    <property type="entry name" value="Ribosomal Protein L25, Chain P"/>
    <property type="match status" value="2"/>
</dbReference>
<dbReference type="HAMAP" id="MF_00126">
    <property type="entry name" value="Gln_tRNA_synth"/>
    <property type="match status" value="1"/>
</dbReference>
<dbReference type="InterPro" id="IPR004514">
    <property type="entry name" value="Gln-tRNA-synth"/>
</dbReference>
<dbReference type="InterPro" id="IPR050132">
    <property type="entry name" value="Gln/Glu-tRNA_Ligase"/>
</dbReference>
<dbReference type="InterPro" id="IPR022861">
    <property type="entry name" value="Gln_tRNA_ligase_bac"/>
</dbReference>
<dbReference type="InterPro" id="IPR000924">
    <property type="entry name" value="Glu/Gln-tRNA-synth"/>
</dbReference>
<dbReference type="InterPro" id="IPR020058">
    <property type="entry name" value="Glu/Gln-tRNA-synth_Ib_cat-dom"/>
</dbReference>
<dbReference type="InterPro" id="IPR020059">
    <property type="entry name" value="Glu/Gln-tRNA-synth_Ib_codon-bd"/>
</dbReference>
<dbReference type="InterPro" id="IPR020056">
    <property type="entry name" value="Rbsml_bL25/Gln-tRNA_synth_N"/>
</dbReference>
<dbReference type="InterPro" id="IPR011035">
    <property type="entry name" value="Ribosomal_bL25/Gln-tRNA_synth"/>
</dbReference>
<dbReference type="InterPro" id="IPR014729">
    <property type="entry name" value="Rossmann-like_a/b/a_fold"/>
</dbReference>
<dbReference type="InterPro" id="IPR049437">
    <property type="entry name" value="tRNA-synt_1c_C2"/>
</dbReference>
<dbReference type="NCBIfam" id="TIGR00440">
    <property type="entry name" value="glnS"/>
    <property type="match status" value="1"/>
</dbReference>
<dbReference type="NCBIfam" id="NF011291">
    <property type="entry name" value="PRK14703.1"/>
    <property type="match status" value="1"/>
</dbReference>
<dbReference type="PANTHER" id="PTHR43097:SF5">
    <property type="entry name" value="GLUTAMATE--TRNA LIGASE"/>
    <property type="match status" value="1"/>
</dbReference>
<dbReference type="PANTHER" id="PTHR43097">
    <property type="entry name" value="GLUTAMINE-TRNA LIGASE"/>
    <property type="match status" value="1"/>
</dbReference>
<dbReference type="Pfam" id="PF00749">
    <property type="entry name" value="tRNA-synt_1c"/>
    <property type="match status" value="1"/>
</dbReference>
<dbReference type="Pfam" id="PF03950">
    <property type="entry name" value="tRNA-synt_1c_C"/>
    <property type="match status" value="1"/>
</dbReference>
<dbReference type="Pfam" id="PF20974">
    <property type="entry name" value="tRNA-synt_1c_C2"/>
    <property type="match status" value="1"/>
</dbReference>
<dbReference type="PRINTS" id="PR00987">
    <property type="entry name" value="TRNASYNTHGLU"/>
</dbReference>
<dbReference type="SUPFAM" id="SSF52374">
    <property type="entry name" value="Nucleotidylyl transferase"/>
    <property type="match status" value="1"/>
</dbReference>
<dbReference type="SUPFAM" id="SSF50715">
    <property type="entry name" value="Ribosomal protein L25-like"/>
    <property type="match status" value="1"/>
</dbReference>
<dbReference type="PROSITE" id="PS00178">
    <property type="entry name" value="AA_TRNA_LIGASE_I"/>
    <property type="match status" value="1"/>
</dbReference>
<evidence type="ECO:0000255" key="1">
    <source>
        <dbReference type="HAMAP-Rule" id="MF_00126"/>
    </source>
</evidence>
<sequence>MLNKDQFADNHFIRTIIEDDLKSGKHEAVQTRFPPEPNGYLHIGHAKSICLNFGLAYIYDGLCNLRFDDTNPEKENDEYVNAIKEDVEWLGFHWAGEPRFASDYFDRLYDYAVGLIKDGKAYVDDLTPEEMREYRGTLTEAGKNSPYRDRSIEENLDLFTRMKNGEFPDGSKTLRLKIDMAAGNINMRDPVIYRIRRAHHHNTGDKWCIYPMYDYTHCISDAIEGITHSLCTLEFEAHRPLYDWVLDNIPALHATRPRQYEFSRLELLYTITSKRKLNQLVVEKHVSGWDDPRMPTISGMRRRGYTPEGVRLFAKRAGISKSENIVDMSVLEGAIREELENSAPRLMAVLNPLKVTLTNFQAGKTQSRRAAFHPNHEEMGDREVPVSQTIYIEADDFAENPPKGFKRLIPGGEVRLRHGYVIKCGEVVKDEAGNVVELKCSIDHDTLGKNPEGRKVKGVIHWVSAEHAAEIKVRLYDRLFTVERPGAVRGEDGEYLPFTDFLNPESVKEITAYAEPAAKDLPAESRWQFERIGYFVTDRQDHGKDTPVFNRTVTLKDSWQPK</sequence>
<proteinExistence type="inferred from homology"/>
<accession>Q5F7G0</accession>
<comment type="catalytic activity">
    <reaction evidence="1">
        <text>tRNA(Gln) + L-glutamine + ATP = L-glutaminyl-tRNA(Gln) + AMP + diphosphate</text>
        <dbReference type="Rhea" id="RHEA:20121"/>
        <dbReference type="Rhea" id="RHEA-COMP:9662"/>
        <dbReference type="Rhea" id="RHEA-COMP:9681"/>
        <dbReference type="ChEBI" id="CHEBI:30616"/>
        <dbReference type="ChEBI" id="CHEBI:33019"/>
        <dbReference type="ChEBI" id="CHEBI:58359"/>
        <dbReference type="ChEBI" id="CHEBI:78442"/>
        <dbReference type="ChEBI" id="CHEBI:78521"/>
        <dbReference type="ChEBI" id="CHEBI:456215"/>
        <dbReference type="EC" id="6.1.1.18"/>
    </reaction>
</comment>
<comment type="subunit">
    <text evidence="1">Monomer.</text>
</comment>
<comment type="subcellular location">
    <subcellularLocation>
        <location evidence="1">Cytoplasm</location>
    </subcellularLocation>
</comment>
<comment type="similarity">
    <text evidence="1">Belongs to the class-I aminoacyl-tRNA synthetase family.</text>
</comment>
<organism>
    <name type="scientific">Neisseria gonorrhoeae (strain ATCC 700825 / FA 1090)</name>
    <dbReference type="NCBI Taxonomy" id="242231"/>
    <lineage>
        <taxon>Bacteria</taxon>
        <taxon>Pseudomonadati</taxon>
        <taxon>Pseudomonadota</taxon>
        <taxon>Betaproteobacteria</taxon>
        <taxon>Neisseriales</taxon>
        <taxon>Neisseriaceae</taxon>
        <taxon>Neisseria</taxon>
    </lineage>
</organism>
<keyword id="KW-0030">Aminoacyl-tRNA synthetase</keyword>
<keyword id="KW-0067">ATP-binding</keyword>
<keyword id="KW-0963">Cytoplasm</keyword>
<keyword id="KW-0436">Ligase</keyword>
<keyword id="KW-0547">Nucleotide-binding</keyword>
<keyword id="KW-0648">Protein biosynthesis</keyword>
<keyword id="KW-1185">Reference proteome</keyword>
<name>SYQ_NEIG1</name>
<gene>
    <name evidence="1" type="primary">glnS</name>
    <name type="ordered locus">NGO_1218</name>
</gene>
<feature type="chain" id="PRO_0000242871" description="Glutamine--tRNA ligase">
    <location>
        <begin position="1"/>
        <end position="562"/>
    </location>
</feature>
<feature type="short sequence motif" description="'HIGH' region" evidence="1">
    <location>
        <begin position="35"/>
        <end position="45"/>
    </location>
</feature>
<feature type="short sequence motif" description="'KMSKS' region" evidence="1">
    <location>
        <begin position="271"/>
        <end position="275"/>
    </location>
</feature>
<feature type="binding site" evidence="1">
    <location>
        <begin position="36"/>
        <end position="38"/>
    </location>
    <ligand>
        <name>ATP</name>
        <dbReference type="ChEBI" id="CHEBI:30616"/>
    </ligand>
</feature>
<feature type="binding site" evidence="1">
    <location>
        <begin position="42"/>
        <end position="48"/>
    </location>
    <ligand>
        <name>ATP</name>
        <dbReference type="ChEBI" id="CHEBI:30616"/>
    </ligand>
</feature>
<feature type="binding site" evidence="1">
    <location>
        <position position="68"/>
    </location>
    <ligand>
        <name>L-glutamine</name>
        <dbReference type="ChEBI" id="CHEBI:58359"/>
    </ligand>
</feature>
<feature type="binding site" evidence="1">
    <location>
        <position position="213"/>
    </location>
    <ligand>
        <name>L-glutamine</name>
        <dbReference type="ChEBI" id="CHEBI:58359"/>
    </ligand>
</feature>
<feature type="binding site" evidence="1">
    <location>
        <position position="232"/>
    </location>
    <ligand>
        <name>ATP</name>
        <dbReference type="ChEBI" id="CHEBI:30616"/>
    </ligand>
</feature>
<feature type="binding site" evidence="1">
    <location>
        <begin position="264"/>
        <end position="265"/>
    </location>
    <ligand>
        <name>ATP</name>
        <dbReference type="ChEBI" id="CHEBI:30616"/>
    </ligand>
</feature>
<protein>
    <recommendedName>
        <fullName evidence="1">Glutamine--tRNA ligase</fullName>
        <ecNumber evidence="1">6.1.1.18</ecNumber>
    </recommendedName>
    <alternativeName>
        <fullName evidence="1">Glutaminyl-tRNA synthetase</fullName>
        <shortName evidence="1">GlnRS</shortName>
    </alternativeName>
</protein>
<reference key="1">
    <citation type="submission" date="2003-03" db="EMBL/GenBank/DDBJ databases">
        <title>The complete genome sequence of Neisseria gonorrhoeae.</title>
        <authorList>
            <person name="Lewis L.A."/>
            <person name="Gillaspy A.F."/>
            <person name="McLaughlin R.E."/>
            <person name="Gipson M."/>
            <person name="Ducey T.F."/>
            <person name="Ownbey T."/>
            <person name="Hartman K."/>
            <person name="Nydick C."/>
            <person name="Carson M.B."/>
            <person name="Vaughn J."/>
            <person name="Thomson C."/>
            <person name="Song L."/>
            <person name="Lin S."/>
            <person name="Yuan X."/>
            <person name="Najar F."/>
            <person name="Zhan M."/>
            <person name="Ren Q."/>
            <person name="Zhu H."/>
            <person name="Qi S."/>
            <person name="Kenton S.M."/>
            <person name="Lai H."/>
            <person name="White J.D."/>
            <person name="Clifton S."/>
            <person name="Roe B.A."/>
            <person name="Dyer D.W."/>
        </authorList>
    </citation>
    <scope>NUCLEOTIDE SEQUENCE [LARGE SCALE GENOMIC DNA]</scope>
    <source>
        <strain>ATCC 700825 / FA 1090</strain>
    </source>
</reference>